<gene>
    <name type="primary">eif3hb</name>
    <name type="synonym">eif3s3b</name>
    <name type="ORF">zgc:123049</name>
</gene>
<organism>
    <name type="scientific">Danio rerio</name>
    <name type="common">Zebrafish</name>
    <name type="synonym">Brachydanio rerio</name>
    <dbReference type="NCBI Taxonomy" id="7955"/>
    <lineage>
        <taxon>Eukaryota</taxon>
        <taxon>Metazoa</taxon>
        <taxon>Chordata</taxon>
        <taxon>Craniata</taxon>
        <taxon>Vertebrata</taxon>
        <taxon>Euteleostomi</taxon>
        <taxon>Actinopterygii</taxon>
        <taxon>Neopterygii</taxon>
        <taxon>Teleostei</taxon>
        <taxon>Ostariophysi</taxon>
        <taxon>Cypriniformes</taxon>
        <taxon>Danionidae</taxon>
        <taxon>Danioninae</taxon>
        <taxon>Danio</taxon>
    </lineage>
</organism>
<keyword id="KW-0963">Cytoplasm</keyword>
<keyword id="KW-0396">Initiation factor</keyword>
<keyword id="KW-0648">Protein biosynthesis</keyword>
<keyword id="KW-1185">Reference proteome</keyword>
<accession>Q5PR67</accession>
<accession>Q3B746</accession>
<reference key="1">
    <citation type="submission" date="2005-10" db="EMBL/GenBank/DDBJ databases">
        <authorList>
            <consortium name="NIH - Zebrafish Gene Collection (ZGC) project"/>
        </authorList>
    </citation>
    <scope>NUCLEOTIDE SEQUENCE [LARGE SCALE MRNA]</scope>
    <source>
        <tissue>Eye</tissue>
        <tissue>Heart</tissue>
    </source>
</reference>
<evidence type="ECO:0000255" key="1">
    <source>
        <dbReference type="HAMAP-Rule" id="MF_03007"/>
    </source>
</evidence>
<evidence type="ECO:0000255" key="2">
    <source>
        <dbReference type="PROSITE-ProRule" id="PRU01182"/>
    </source>
</evidence>
<evidence type="ECO:0000256" key="3">
    <source>
        <dbReference type="SAM" id="MobiDB-lite"/>
    </source>
</evidence>
<evidence type="ECO:0000305" key="4"/>
<feature type="chain" id="PRO_0000365177" description="Eukaryotic translation initiation factor 3 subunit H-B">
    <location>
        <begin position="1"/>
        <end position="333"/>
    </location>
</feature>
<feature type="domain" description="MPN" evidence="2">
    <location>
        <begin position="20"/>
        <end position="154"/>
    </location>
</feature>
<feature type="region of interest" description="Disordered" evidence="3">
    <location>
        <begin position="249"/>
        <end position="295"/>
    </location>
</feature>
<feature type="compositionally biased region" description="Low complexity" evidence="3">
    <location>
        <begin position="250"/>
        <end position="261"/>
    </location>
</feature>
<sequence>MASRKETPNGKTLDTPVKQIQIEGLVVMKIIKHYQEEGQGSEVVQGVLLGLVVEDQLEITNCFPFPQHTEDDADFDEVQYQMEMMRSLRHVNIDHLHVGWYQSTLYGSFVSRALLDSQFSYQHAIEESVVLIYDPIKTAQGSLCLKAYRLTPKLMEICKEKDFSSEGLKKASVGYEHMFEEVPIVIKNSHLINVLLWELEEKSTAADKHELLSLSSSSHLEKSLQMLMDRVDDMSQDIVKYNNYSRSLSKQQQQKHQYVQRRQQENAQRQSRGEPPLPEEDLTKMFKPPQPPPRMDTLLIASQINTYCQTIKEFTSQNLGKLFMAEALQGPSS</sequence>
<name>EI3HB_DANRE</name>
<protein>
    <recommendedName>
        <fullName evidence="1">Eukaryotic translation initiation factor 3 subunit H-B</fullName>
        <shortName evidence="1">eIF3h-B</shortName>
    </recommendedName>
    <alternativeName>
        <fullName evidence="1">Eukaryotic translation initiation factor 3 subunit 3-B</fullName>
    </alternativeName>
    <alternativeName>
        <fullName>eIF-3-gamma-B</fullName>
    </alternativeName>
    <alternativeName>
        <fullName evidence="1">eIF3 p40 subunit B</fullName>
    </alternativeName>
</protein>
<comment type="function">
    <text evidence="1">Component of the eukaryotic translation initiation factor 3 (eIF-3) complex, which is involved in protein synthesis of a specialized repertoire of mRNAs and, together with other initiation factors, stimulates binding of mRNA and methionyl-tRNAi to the 40S ribosome. The eIF-3 complex specifically targets and initiates translation of a subset of mRNAs involved in cell proliferation.</text>
</comment>
<comment type="subunit">
    <text evidence="1">Component of the eukaryotic translation initiation factor 3 (eIF-3) complex, which is composed of 13 subunits: eif3a, eif3b, eif3c, eif3d, eif3e, eif3f, eif3g, eif3h, eif3i, eif3j, eif3k, eif3l and eif3m.</text>
</comment>
<comment type="subcellular location">
    <subcellularLocation>
        <location evidence="1">Cytoplasm</location>
    </subcellularLocation>
</comment>
<comment type="similarity">
    <text evidence="1">Belongs to the eIF-3 subunit H family.</text>
</comment>
<comment type="sequence caution" evidence="4">
    <conflict type="erroneous initiation">
        <sequence resource="EMBL-CDS" id="AAH86809"/>
    </conflict>
</comment>
<dbReference type="EMBL" id="BC086809">
    <property type="protein sequence ID" value="AAH86809.1"/>
    <property type="status" value="ALT_INIT"/>
    <property type="molecule type" value="mRNA"/>
</dbReference>
<dbReference type="EMBL" id="BC107824">
    <property type="protein sequence ID" value="AAI07825.1"/>
    <property type="molecule type" value="mRNA"/>
</dbReference>
<dbReference type="RefSeq" id="NP_001030341.1">
    <property type="nucleotide sequence ID" value="NM_001035264.2"/>
</dbReference>
<dbReference type="SMR" id="Q5PR67"/>
<dbReference type="FunCoup" id="Q5PR67">
    <property type="interactions" value="2881"/>
</dbReference>
<dbReference type="STRING" id="7955.ENSDARP00000052433"/>
<dbReference type="MEROPS" id="M67.971"/>
<dbReference type="PaxDb" id="7955-ENSDARP00000052433"/>
<dbReference type="Ensembl" id="ENSDART00000052434">
    <property type="protein sequence ID" value="ENSDARP00000052433"/>
    <property type="gene ID" value="ENSDARG00000036116"/>
</dbReference>
<dbReference type="GeneID" id="567151"/>
<dbReference type="KEGG" id="dre:567151"/>
<dbReference type="AGR" id="ZFIN:ZDB-GENE-051030-42"/>
<dbReference type="CTD" id="567151"/>
<dbReference type="ZFIN" id="ZDB-GENE-051030-42">
    <property type="gene designation" value="eif3hb"/>
</dbReference>
<dbReference type="eggNOG" id="KOG1560">
    <property type="taxonomic scope" value="Eukaryota"/>
</dbReference>
<dbReference type="HOGENOM" id="CLU_044094_0_0_1"/>
<dbReference type="InParanoid" id="Q5PR67"/>
<dbReference type="OMA" id="RLETMCA"/>
<dbReference type="OrthoDB" id="10265695at2759"/>
<dbReference type="PhylomeDB" id="Q5PR67"/>
<dbReference type="Reactome" id="R-DRE-156827">
    <property type="pathway name" value="L13a-mediated translational silencing of Ceruloplasmin expression"/>
</dbReference>
<dbReference type="Reactome" id="R-DRE-72689">
    <property type="pathway name" value="Formation of a pool of free 40S subunits"/>
</dbReference>
<dbReference type="Reactome" id="R-DRE-72695">
    <property type="pathway name" value="Formation of the ternary complex, and subsequently, the 43S complex"/>
</dbReference>
<dbReference type="Reactome" id="R-DRE-72702">
    <property type="pathway name" value="Ribosomal scanning and start codon recognition"/>
</dbReference>
<dbReference type="PRO" id="PR:Q5PR67"/>
<dbReference type="Proteomes" id="UP000000437">
    <property type="component" value="Chromosome 19"/>
</dbReference>
<dbReference type="Bgee" id="ENSDARG00000036116">
    <property type="expression patterns" value="Expressed in muscle tissue and 28 other cell types or tissues"/>
</dbReference>
<dbReference type="ExpressionAtlas" id="Q5PR67">
    <property type="expression patterns" value="baseline and differential"/>
</dbReference>
<dbReference type="GO" id="GO:0016282">
    <property type="term" value="C:eukaryotic 43S preinitiation complex"/>
    <property type="evidence" value="ECO:0000318"/>
    <property type="project" value="GO_Central"/>
</dbReference>
<dbReference type="GO" id="GO:0033290">
    <property type="term" value="C:eukaryotic 48S preinitiation complex"/>
    <property type="evidence" value="ECO:0007669"/>
    <property type="project" value="UniProtKB-UniRule"/>
</dbReference>
<dbReference type="GO" id="GO:0005852">
    <property type="term" value="C:eukaryotic translation initiation factor 3 complex"/>
    <property type="evidence" value="ECO:0000250"/>
    <property type="project" value="UniProtKB"/>
</dbReference>
<dbReference type="GO" id="GO:0008237">
    <property type="term" value="F:metallopeptidase activity"/>
    <property type="evidence" value="ECO:0000318"/>
    <property type="project" value="GO_Central"/>
</dbReference>
<dbReference type="GO" id="GO:0003743">
    <property type="term" value="F:translation initiation factor activity"/>
    <property type="evidence" value="ECO:0007669"/>
    <property type="project" value="UniProtKB-UniRule"/>
</dbReference>
<dbReference type="GO" id="GO:0007420">
    <property type="term" value="P:brain development"/>
    <property type="evidence" value="ECO:0000315"/>
    <property type="project" value="ZFIN"/>
</dbReference>
<dbReference type="GO" id="GO:0001732">
    <property type="term" value="P:formation of cytoplasmic translation initiation complex"/>
    <property type="evidence" value="ECO:0007669"/>
    <property type="project" value="UniProtKB-UniRule"/>
</dbReference>
<dbReference type="GO" id="GO:0007507">
    <property type="term" value="P:heart development"/>
    <property type="evidence" value="ECO:0000315"/>
    <property type="project" value="ZFIN"/>
</dbReference>
<dbReference type="GO" id="GO:0006413">
    <property type="term" value="P:translational initiation"/>
    <property type="evidence" value="ECO:0000250"/>
    <property type="project" value="UniProtKB"/>
</dbReference>
<dbReference type="CDD" id="cd08065">
    <property type="entry name" value="MPN_eIF3h"/>
    <property type="match status" value="1"/>
</dbReference>
<dbReference type="FunFam" id="3.40.140.10:FF:000020">
    <property type="entry name" value="Eukaryotic translation initiation factor 3 subunit H"/>
    <property type="match status" value="1"/>
</dbReference>
<dbReference type="Gene3D" id="3.40.140.10">
    <property type="entry name" value="Cytidine Deaminase, domain 2"/>
    <property type="match status" value="1"/>
</dbReference>
<dbReference type="HAMAP" id="MF_03007">
    <property type="entry name" value="eIF3h"/>
    <property type="match status" value="1"/>
</dbReference>
<dbReference type="InterPro" id="IPR027524">
    <property type="entry name" value="eIF3h"/>
</dbReference>
<dbReference type="InterPro" id="IPR045810">
    <property type="entry name" value="eIF3h_C"/>
</dbReference>
<dbReference type="InterPro" id="IPR000555">
    <property type="entry name" value="JAMM/MPN+_dom"/>
</dbReference>
<dbReference type="InterPro" id="IPR050242">
    <property type="entry name" value="JAMM_MPN+_peptidase_M67A"/>
</dbReference>
<dbReference type="InterPro" id="IPR037518">
    <property type="entry name" value="MPN"/>
</dbReference>
<dbReference type="PANTHER" id="PTHR10410">
    <property type="entry name" value="EUKARYOTIC TRANSLATION INITIATION FACTOR 3 -RELATED"/>
    <property type="match status" value="1"/>
</dbReference>
<dbReference type="Pfam" id="PF19445">
    <property type="entry name" value="eIF3h_C"/>
    <property type="match status" value="1"/>
</dbReference>
<dbReference type="Pfam" id="PF01398">
    <property type="entry name" value="JAB"/>
    <property type="match status" value="1"/>
</dbReference>
<dbReference type="SMART" id="SM00232">
    <property type="entry name" value="JAB_MPN"/>
    <property type="match status" value="1"/>
</dbReference>
<dbReference type="PROSITE" id="PS50249">
    <property type="entry name" value="MPN"/>
    <property type="match status" value="1"/>
</dbReference>
<proteinExistence type="evidence at transcript level"/>